<feature type="chain" id="PRO_0000095921" description="Translation initiation factor IF-1, chloroplastic">
    <location>
        <begin position="1"/>
        <end position="77"/>
    </location>
</feature>
<feature type="domain" description="S1-like" evidence="1">
    <location>
        <begin position="1"/>
        <end position="71"/>
    </location>
</feature>
<sequence length="77" mass="9274">MKEQKWIHEGLITESLPNGMFRVRLDNEDFILGYISGRIRRSFIRILPGDRVKIEISRYDSTRGRIIYRLRNKDSNY</sequence>
<dbReference type="EMBL" id="AF347629">
    <property type="protein sequence ID" value="AAK38855.1"/>
    <property type="molecule type" value="Genomic_DNA"/>
</dbReference>
<dbReference type="RefSeq" id="YP_010458794.1">
    <property type="nucleotide sequence ID" value="NC_065728.1"/>
</dbReference>
<dbReference type="SMR" id="Q95GM9"/>
<dbReference type="GeneID" id="74555699"/>
<dbReference type="GO" id="GO:0009507">
    <property type="term" value="C:chloroplast"/>
    <property type="evidence" value="ECO:0007669"/>
    <property type="project" value="UniProtKB-SubCell"/>
</dbReference>
<dbReference type="GO" id="GO:0005829">
    <property type="term" value="C:cytosol"/>
    <property type="evidence" value="ECO:0007669"/>
    <property type="project" value="TreeGrafter"/>
</dbReference>
<dbReference type="GO" id="GO:0043022">
    <property type="term" value="F:ribosome binding"/>
    <property type="evidence" value="ECO:0007669"/>
    <property type="project" value="UniProtKB-UniRule"/>
</dbReference>
<dbReference type="GO" id="GO:0019843">
    <property type="term" value="F:rRNA binding"/>
    <property type="evidence" value="ECO:0007669"/>
    <property type="project" value="UniProtKB-UniRule"/>
</dbReference>
<dbReference type="GO" id="GO:0003743">
    <property type="term" value="F:translation initiation factor activity"/>
    <property type="evidence" value="ECO:0007669"/>
    <property type="project" value="UniProtKB-UniRule"/>
</dbReference>
<dbReference type="CDD" id="cd04451">
    <property type="entry name" value="S1_IF1"/>
    <property type="match status" value="1"/>
</dbReference>
<dbReference type="FunFam" id="2.40.50.140:FF:000019">
    <property type="entry name" value="Translation initiation factor IF-1, chloroplastic"/>
    <property type="match status" value="1"/>
</dbReference>
<dbReference type="Gene3D" id="2.40.50.140">
    <property type="entry name" value="Nucleic acid-binding proteins"/>
    <property type="match status" value="1"/>
</dbReference>
<dbReference type="HAMAP" id="MF_00075">
    <property type="entry name" value="IF_1"/>
    <property type="match status" value="1"/>
</dbReference>
<dbReference type="InterPro" id="IPR012340">
    <property type="entry name" value="NA-bd_OB-fold"/>
</dbReference>
<dbReference type="InterPro" id="IPR006196">
    <property type="entry name" value="RNA-binding_domain_S1_IF1"/>
</dbReference>
<dbReference type="InterPro" id="IPR004368">
    <property type="entry name" value="TIF_IF1"/>
</dbReference>
<dbReference type="NCBIfam" id="TIGR00008">
    <property type="entry name" value="infA"/>
    <property type="match status" value="1"/>
</dbReference>
<dbReference type="PANTHER" id="PTHR33370">
    <property type="entry name" value="TRANSLATION INITIATION FACTOR IF-1, CHLOROPLASTIC"/>
    <property type="match status" value="1"/>
</dbReference>
<dbReference type="PANTHER" id="PTHR33370:SF1">
    <property type="entry name" value="TRANSLATION INITIATION FACTOR IF-1, CHLOROPLASTIC"/>
    <property type="match status" value="1"/>
</dbReference>
<dbReference type="Pfam" id="PF01176">
    <property type="entry name" value="eIF-1a"/>
    <property type="match status" value="1"/>
</dbReference>
<dbReference type="SUPFAM" id="SSF50249">
    <property type="entry name" value="Nucleic acid-binding proteins"/>
    <property type="match status" value="1"/>
</dbReference>
<dbReference type="PROSITE" id="PS50832">
    <property type="entry name" value="S1_IF1_TYPE"/>
    <property type="match status" value="1"/>
</dbReference>
<gene>
    <name evidence="1" type="primary">infA</name>
</gene>
<evidence type="ECO:0000255" key="1">
    <source>
        <dbReference type="HAMAP-Rule" id="MF_00075"/>
    </source>
</evidence>
<organism>
    <name type="scientific">Brexia madagascariensis</name>
    <dbReference type="NCBI Taxonomy" id="39394"/>
    <lineage>
        <taxon>Eukaryota</taxon>
        <taxon>Viridiplantae</taxon>
        <taxon>Streptophyta</taxon>
        <taxon>Embryophyta</taxon>
        <taxon>Tracheophyta</taxon>
        <taxon>Spermatophyta</taxon>
        <taxon>Magnoliopsida</taxon>
        <taxon>eudicotyledons</taxon>
        <taxon>Gunneridae</taxon>
        <taxon>Pentapetalae</taxon>
        <taxon>rosids</taxon>
        <taxon>fabids</taxon>
        <taxon>Celastrales</taxon>
        <taxon>Celastraceae</taxon>
        <taxon>Brexia</taxon>
    </lineage>
</organism>
<proteinExistence type="inferred from homology"/>
<name>IF1C_BREMA</name>
<keyword id="KW-0150">Chloroplast</keyword>
<keyword id="KW-0396">Initiation factor</keyword>
<keyword id="KW-0934">Plastid</keyword>
<keyword id="KW-0648">Protein biosynthesis</keyword>
<keyword id="KW-0694">RNA-binding</keyword>
<keyword id="KW-0699">rRNA-binding</keyword>
<geneLocation type="chloroplast"/>
<comment type="function">
    <text evidence="1">One of the essential components for the initiation of protein synthesis. Stabilizes the binding of IF-2 and IF-3 on the 30S subunit to which N-formylmethionyl-tRNA(fMet) subsequently binds. Helps modulate mRNA selection, yielding the 30S pre-initiation complex (PIC). Upon addition of the 50S ribosomal subunit IF-1, IF-2 and IF-3 are released leaving the mature 70S translation initiation complex.</text>
</comment>
<comment type="subunit">
    <text evidence="1">Component of the 30S ribosomal translation pre-initiation complex which assembles on the 30S ribosome in the order IF-2 and IF-3, IF-1 and N-formylmethionyl-tRNA(fMet); mRNA recruitment can occur at any time during PIC assembly.</text>
</comment>
<comment type="subcellular location">
    <subcellularLocation>
        <location evidence="1">Plastid</location>
        <location evidence="1">Chloroplast</location>
    </subcellularLocation>
</comment>
<comment type="similarity">
    <text evidence="1">Belongs to the IF-1 family.</text>
</comment>
<protein>
    <recommendedName>
        <fullName evidence="1">Translation initiation factor IF-1, chloroplastic</fullName>
    </recommendedName>
</protein>
<accession>Q95GM9</accession>
<reference key="1">
    <citation type="journal article" date="2001" name="Plant Cell">
        <title>Many parallel losses of infA from chloroplast DNA during angiosperm evolution with multiple independent transfers to the nucleus.</title>
        <authorList>
            <person name="Millen R.S."/>
            <person name="Olmstead R.G."/>
            <person name="Adams K.L."/>
            <person name="Palmer J.D."/>
            <person name="Lao N.T."/>
            <person name="Heggie L."/>
            <person name="Kavanagh T.A."/>
            <person name="Hibberd J.M."/>
            <person name="Gray J.C."/>
            <person name="Morden C.W."/>
            <person name="Calie P.J."/>
            <person name="Jermiin L.S."/>
            <person name="Wolfe K.H."/>
        </authorList>
    </citation>
    <scope>NUCLEOTIDE SEQUENCE [GENOMIC DNA]</scope>
</reference>